<feature type="chain" id="PRO_0000107155" description="Uncharacterized protein MJ1062">
    <location>
        <begin position="1"/>
        <end position="484"/>
    </location>
</feature>
<feature type="domain" description="N-acetyltransferase" evidence="1">
    <location>
        <begin position="334"/>
        <end position="484"/>
    </location>
</feature>
<feature type="strand" evidence="2">
    <location>
        <begin position="324"/>
        <end position="326"/>
    </location>
</feature>
<feature type="strand" evidence="2">
    <location>
        <begin position="333"/>
        <end position="338"/>
    </location>
</feature>
<feature type="helix" evidence="2">
    <location>
        <begin position="341"/>
        <end position="343"/>
    </location>
</feature>
<feature type="helix" evidence="2">
    <location>
        <begin position="344"/>
        <end position="351"/>
    </location>
</feature>
<feature type="helix" evidence="2">
    <location>
        <begin position="354"/>
        <end position="357"/>
    </location>
</feature>
<feature type="helix" evidence="2">
    <location>
        <begin position="369"/>
        <end position="378"/>
    </location>
</feature>
<feature type="strand" evidence="2">
    <location>
        <begin position="383"/>
        <end position="391"/>
    </location>
</feature>
<feature type="strand" evidence="2">
    <location>
        <begin position="394"/>
        <end position="404"/>
    </location>
</feature>
<feature type="strand" evidence="2">
    <location>
        <begin position="408"/>
        <end position="410"/>
    </location>
</feature>
<feature type="strand" evidence="2">
    <location>
        <begin position="412"/>
        <end position="417"/>
    </location>
</feature>
<feature type="helix" evidence="2">
    <location>
        <begin position="427"/>
        <end position="441"/>
    </location>
</feature>
<feature type="strand" evidence="2">
    <location>
        <begin position="446"/>
        <end position="452"/>
    </location>
</feature>
<feature type="helix" evidence="2">
    <location>
        <begin position="456"/>
        <end position="464"/>
    </location>
</feature>
<feature type="strand" evidence="2">
    <location>
        <begin position="468"/>
        <end position="472"/>
    </location>
</feature>
<feature type="strand" evidence="2">
    <location>
        <begin position="477"/>
        <end position="483"/>
    </location>
</feature>
<evidence type="ECO:0000255" key="1">
    <source>
        <dbReference type="PROSITE-ProRule" id="PRU00532"/>
    </source>
</evidence>
<evidence type="ECO:0007829" key="2">
    <source>
        <dbReference type="PDB" id="3EO4"/>
    </source>
</evidence>
<name>Y1062_METJA</name>
<keyword id="KW-0002">3D-structure</keyword>
<keyword id="KW-1185">Reference proteome</keyword>
<reference key="1">
    <citation type="journal article" date="1996" name="Science">
        <title>Complete genome sequence of the methanogenic archaeon, Methanococcus jannaschii.</title>
        <authorList>
            <person name="Bult C.J."/>
            <person name="White O."/>
            <person name="Olsen G.J."/>
            <person name="Zhou L."/>
            <person name="Fleischmann R.D."/>
            <person name="Sutton G.G."/>
            <person name="Blake J.A."/>
            <person name="FitzGerald L.M."/>
            <person name="Clayton R.A."/>
            <person name="Gocayne J.D."/>
            <person name="Kerlavage A.R."/>
            <person name="Dougherty B.A."/>
            <person name="Tomb J.-F."/>
            <person name="Adams M.D."/>
            <person name="Reich C.I."/>
            <person name="Overbeek R."/>
            <person name="Kirkness E.F."/>
            <person name="Weinstock K.G."/>
            <person name="Merrick J.M."/>
            <person name="Glodek A."/>
            <person name="Scott J.L."/>
            <person name="Geoghagen N.S.M."/>
            <person name="Weidman J.F."/>
            <person name="Fuhrmann J.L."/>
            <person name="Nguyen D."/>
            <person name="Utterback T.R."/>
            <person name="Kelley J.M."/>
            <person name="Peterson J.D."/>
            <person name="Sadow P.W."/>
            <person name="Hanna M.C."/>
            <person name="Cotton M.D."/>
            <person name="Roberts K.M."/>
            <person name="Hurst M.A."/>
            <person name="Kaine B.P."/>
            <person name="Borodovsky M."/>
            <person name="Klenk H.-P."/>
            <person name="Fraser C.M."/>
            <person name="Smith H.O."/>
            <person name="Woese C.R."/>
            <person name="Venter J.C."/>
        </authorList>
    </citation>
    <scope>NUCLEOTIDE SEQUENCE [LARGE SCALE GENOMIC DNA]</scope>
    <source>
        <strain>ATCC 43067 / DSM 2661 / JAL-1 / JCM 10045 / NBRC 100440</strain>
    </source>
</reference>
<protein>
    <recommendedName>
        <fullName>Uncharacterized protein MJ1062</fullName>
    </recommendedName>
</protein>
<organism>
    <name type="scientific">Methanocaldococcus jannaschii (strain ATCC 43067 / DSM 2661 / JAL-1 / JCM 10045 / NBRC 100440)</name>
    <name type="common">Methanococcus jannaschii</name>
    <dbReference type="NCBI Taxonomy" id="243232"/>
    <lineage>
        <taxon>Archaea</taxon>
        <taxon>Methanobacteriati</taxon>
        <taxon>Methanobacteriota</taxon>
        <taxon>Methanomada group</taxon>
        <taxon>Methanococci</taxon>
        <taxon>Methanococcales</taxon>
        <taxon>Methanocaldococcaceae</taxon>
        <taxon>Methanocaldococcus</taxon>
    </lineage>
</organism>
<sequence>MKIAIITDGSVEMGMGHVYRTLSLANELRKFNVNEIIFFTKSDEDVIKKIEENGFKVIKCSDNNDILKNIKNIKPDVVIIDDLGIEEDFAKNIRELCKKLIFFDNPNPSSNKYADIVVNAIVGSELKNRKYFDEENKTLYFYGPKYLILRNEFYKVKKEMLSRSKNKETKNILIAFGGSDPSNLTCKVLEELLSKDRDFNINVVLGPKFQYEDELNNLLKRYSKSDKIKIYKNIDNMAELMKDNDLIITSPGMTMFEALFLGIPVVVLYQNELQRECYDDYLKKISKTHLNPLKEGYFIDAEHTDLHIGKGKFEIIEAITNIYNCKKIGEDSKIIIRQITDNDLELLMAWRSNPLIYKFFYIQKEPLKWEEHYSWWMSRENRVDWIILLRENNTIRKVGSVNVSQLNTDNPEIGILIGEFFLWGKHIGRHSVSLVLKWLKNIGYKKAHARILENNIRSIKLFESLGFKKTKKGRENEWIYEVNL</sequence>
<proteinExistence type="evidence at protein level"/>
<gene>
    <name type="ordered locus">MJ1062</name>
</gene>
<dbReference type="EMBL" id="L77117">
    <property type="protein sequence ID" value="AAB99065.1"/>
    <property type="molecule type" value="Genomic_DNA"/>
</dbReference>
<dbReference type="PIR" id="E64432">
    <property type="entry name" value="E64432"/>
</dbReference>
<dbReference type="RefSeq" id="WP_010870575.1">
    <property type="nucleotide sequence ID" value="NC_000909.1"/>
</dbReference>
<dbReference type="PDB" id="3EO4">
    <property type="method" value="X-ray"/>
    <property type="resolution" value="2.19 A"/>
    <property type="chains" value="A/B/C/D=324-484"/>
</dbReference>
<dbReference type="PDBsum" id="3EO4"/>
<dbReference type="SMR" id="Q58462"/>
<dbReference type="FunCoup" id="Q58462">
    <property type="interactions" value="1"/>
</dbReference>
<dbReference type="STRING" id="243232.MJ_1062"/>
<dbReference type="PaxDb" id="243232-MJ_1062"/>
<dbReference type="DNASU" id="1451959"/>
<dbReference type="EnsemblBacteria" id="AAB99065">
    <property type="protein sequence ID" value="AAB99065"/>
    <property type="gene ID" value="MJ_1062"/>
</dbReference>
<dbReference type="GeneID" id="1451959"/>
<dbReference type="KEGG" id="mja:MJ_1062"/>
<dbReference type="eggNOG" id="arCOG06581">
    <property type="taxonomic scope" value="Archaea"/>
</dbReference>
<dbReference type="HOGENOM" id="CLU_023406_0_1_2"/>
<dbReference type="InParanoid" id="Q58462"/>
<dbReference type="OrthoDB" id="120213at2157"/>
<dbReference type="PhylomeDB" id="Q58462"/>
<dbReference type="EvolutionaryTrace" id="Q58462"/>
<dbReference type="Proteomes" id="UP000000805">
    <property type="component" value="Chromosome"/>
</dbReference>
<dbReference type="GO" id="GO:0016747">
    <property type="term" value="F:acyltransferase activity, transferring groups other than amino-acyl groups"/>
    <property type="evidence" value="ECO:0007669"/>
    <property type="project" value="InterPro"/>
</dbReference>
<dbReference type="GO" id="GO:0016758">
    <property type="term" value="F:hexosyltransferase activity"/>
    <property type="evidence" value="ECO:0007669"/>
    <property type="project" value="InterPro"/>
</dbReference>
<dbReference type="CDD" id="cd03785">
    <property type="entry name" value="GT28_MurG"/>
    <property type="match status" value="1"/>
</dbReference>
<dbReference type="Gene3D" id="3.40.50.11190">
    <property type="match status" value="1"/>
</dbReference>
<dbReference type="Gene3D" id="3.40.630.30">
    <property type="match status" value="1"/>
</dbReference>
<dbReference type="Gene3D" id="3.40.50.2000">
    <property type="entry name" value="Glycogen Phosphorylase B"/>
    <property type="match status" value="1"/>
</dbReference>
<dbReference type="InterPro" id="IPR016181">
    <property type="entry name" value="Acyl_CoA_acyltransferase"/>
</dbReference>
<dbReference type="InterPro" id="IPR007235">
    <property type="entry name" value="Glyco_trans_28_C"/>
</dbReference>
<dbReference type="InterPro" id="IPR000182">
    <property type="entry name" value="GNAT_dom"/>
</dbReference>
<dbReference type="InterPro" id="IPR020023">
    <property type="entry name" value="PseG"/>
</dbReference>
<dbReference type="NCBIfam" id="TIGR03590">
    <property type="entry name" value="PseG"/>
    <property type="match status" value="1"/>
</dbReference>
<dbReference type="PANTHER" id="PTHR43415:SF3">
    <property type="entry name" value="GNAT-FAMILY ACETYLTRANSFERASE"/>
    <property type="match status" value="1"/>
</dbReference>
<dbReference type="PANTHER" id="PTHR43415">
    <property type="entry name" value="SPERMIDINE N(1)-ACETYLTRANSFERASE"/>
    <property type="match status" value="1"/>
</dbReference>
<dbReference type="Pfam" id="PF13302">
    <property type="entry name" value="Acetyltransf_3"/>
    <property type="match status" value="1"/>
</dbReference>
<dbReference type="Pfam" id="PF04101">
    <property type="entry name" value="Glyco_tran_28_C"/>
    <property type="match status" value="1"/>
</dbReference>
<dbReference type="SUPFAM" id="SSF55729">
    <property type="entry name" value="Acyl-CoA N-acyltransferases (Nat)"/>
    <property type="match status" value="1"/>
</dbReference>
<dbReference type="SUPFAM" id="SSF53756">
    <property type="entry name" value="UDP-Glycosyltransferase/glycogen phosphorylase"/>
    <property type="match status" value="1"/>
</dbReference>
<dbReference type="PROSITE" id="PS51186">
    <property type="entry name" value="GNAT"/>
    <property type="match status" value="1"/>
</dbReference>
<accession>Q58462</accession>